<organism>
    <name type="scientific">Escherichia coli (strain 55989 / EAEC)</name>
    <dbReference type="NCBI Taxonomy" id="585055"/>
    <lineage>
        <taxon>Bacteria</taxon>
        <taxon>Pseudomonadati</taxon>
        <taxon>Pseudomonadota</taxon>
        <taxon>Gammaproteobacteria</taxon>
        <taxon>Enterobacterales</taxon>
        <taxon>Enterobacteriaceae</taxon>
        <taxon>Escherichia</taxon>
    </lineage>
</organism>
<comment type="function">
    <text evidence="1">Catalyzes the conversion of GTP to 2,5-diamino-6-ribosylamino-4(3H)-pyrimidinone 5'-phosphate (DARP), formate and pyrophosphate.</text>
</comment>
<comment type="catalytic activity">
    <reaction evidence="1">
        <text>GTP + 4 H2O = 2,5-diamino-6-hydroxy-4-(5-phosphoribosylamino)-pyrimidine + formate + 2 phosphate + 3 H(+)</text>
        <dbReference type="Rhea" id="RHEA:23704"/>
        <dbReference type="ChEBI" id="CHEBI:15377"/>
        <dbReference type="ChEBI" id="CHEBI:15378"/>
        <dbReference type="ChEBI" id="CHEBI:15740"/>
        <dbReference type="ChEBI" id="CHEBI:37565"/>
        <dbReference type="ChEBI" id="CHEBI:43474"/>
        <dbReference type="ChEBI" id="CHEBI:58614"/>
        <dbReference type="EC" id="3.5.4.25"/>
    </reaction>
</comment>
<comment type="cofactor">
    <cofactor evidence="1">
        <name>Zn(2+)</name>
        <dbReference type="ChEBI" id="CHEBI:29105"/>
    </cofactor>
    <text evidence="1">Binds 1 zinc ion per subunit.</text>
</comment>
<comment type="pathway">
    <text evidence="1">Cofactor biosynthesis; riboflavin biosynthesis; 5-amino-6-(D-ribitylamino)uracil from GTP: step 1/4.</text>
</comment>
<comment type="subunit">
    <text evidence="1">Homodimer.</text>
</comment>
<comment type="similarity">
    <text evidence="1">Belongs to the GTP cyclohydrolase II family.</text>
</comment>
<reference key="1">
    <citation type="journal article" date="2009" name="PLoS Genet.">
        <title>Organised genome dynamics in the Escherichia coli species results in highly diverse adaptive paths.</title>
        <authorList>
            <person name="Touchon M."/>
            <person name="Hoede C."/>
            <person name="Tenaillon O."/>
            <person name="Barbe V."/>
            <person name="Baeriswyl S."/>
            <person name="Bidet P."/>
            <person name="Bingen E."/>
            <person name="Bonacorsi S."/>
            <person name="Bouchier C."/>
            <person name="Bouvet O."/>
            <person name="Calteau A."/>
            <person name="Chiapello H."/>
            <person name="Clermont O."/>
            <person name="Cruveiller S."/>
            <person name="Danchin A."/>
            <person name="Diard M."/>
            <person name="Dossat C."/>
            <person name="Karoui M.E."/>
            <person name="Frapy E."/>
            <person name="Garry L."/>
            <person name="Ghigo J.M."/>
            <person name="Gilles A.M."/>
            <person name="Johnson J."/>
            <person name="Le Bouguenec C."/>
            <person name="Lescat M."/>
            <person name="Mangenot S."/>
            <person name="Martinez-Jehanne V."/>
            <person name="Matic I."/>
            <person name="Nassif X."/>
            <person name="Oztas S."/>
            <person name="Petit M.A."/>
            <person name="Pichon C."/>
            <person name="Rouy Z."/>
            <person name="Ruf C.S."/>
            <person name="Schneider D."/>
            <person name="Tourret J."/>
            <person name="Vacherie B."/>
            <person name="Vallenet D."/>
            <person name="Medigue C."/>
            <person name="Rocha E.P.C."/>
            <person name="Denamur E."/>
        </authorList>
    </citation>
    <scope>NUCLEOTIDE SEQUENCE [LARGE SCALE GENOMIC DNA]</scope>
    <source>
        <strain>55989 / EAEC</strain>
    </source>
</reference>
<gene>
    <name evidence="1" type="primary">ribA</name>
    <name type="ordered locus">EC55989_1438</name>
</gene>
<evidence type="ECO:0000255" key="1">
    <source>
        <dbReference type="HAMAP-Rule" id="MF_00179"/>
    </source>
</evidence>
<dbReference type="EC" id="3.5.4.25" evidence="1"/>
<dbReference type="EMBL" id="CU928145">
    <property type="protein sequence ID" value="CAU97296.1"/>
    <property type="molecule type" value="Genomic_DNA"/>
</dbReference>
<dbReference type="RefSeq" id="WP_001176295.1">
    <property type="nucleotide sequence ID" value="NC_011748.1"/>
</dbReference>
<dbReference type="SMR" id="B7L4B3"/>
<dbReference type="GeneID" id="86946614"/>
<dbReference type="KEGG" id="eck:EC55989_1438"/>
<dbReference type="HOGENOM" id="CLU_020273_2_1_6"/>
<dbReference type="UniPathway" id="UPA00275">
    <property type="reaction ID" value="UER00400"/>
</dbReference>
<dbReference type="Proteomes" id="UP000000746">
    <property type="component" value="Chromosome"/>
</dbReference>
<dbReference type="GO" id="GO:0005829">
    <property type="term" value="C:cytosol"/>
    <property type="evidence" value="ECO:0007669"/>
    <property type="project" value="TreeGrafter"/>
</dbReference>
<dbReference type="GO" id="GO:0005525">
    <property type="term" value="F:GTP binding"/>
    <property type="evidence" value="ECO:0007669"/>
    <property type="project" value="UniProtKB-KW"/>
</dbReference>
<dbReference type="GO" id="GO:0003935">
    <property type="term" value="F:GTP cyclohydrolase II activity"/>
    <property type="evidence" value="ECO:0007669"/>
    <property type="project" value="UniProtKB-UniRule"/>
</dbReference>
<dbReference type="GO" id="GO:0008270">
    <property type="term" value="F:zinc ion binding"/>
    <property type="evidence" value="ECO:0007669"/>
    <property type="project" value="UniProtKB-UniRule"/>
</dbReference>
<dbReference type="GO" id="GO:0009231">
    <property type="term" value="P:riboflavin biosynthetic process"/>
    <property type="evidence" value="ECO:0007669"/>
    <property type="project" value="UniProtKB-UniRule"/>
</dbReference>
<dbReference type="CDD" id="cd00641">
    <property type="entry name" value="GTP_cyclohydro2"/>
    <property type="match status" value="1"/>
</dbReference>
<dbReference type="FunFam" id="3.40.50.10990:FF:000002">
    <property type="entry name" value="GTP cyclohydrolase-2"/>
    <property type="match status" value="1"/>
</dbReference>
<dbReference type="Gene3D" id="3.40.50.10990">
    <property type="entry name" value="GTP cyclohydrolase II"/>
    <property type="match status" value="1"/>
</dbReference>
<dbReference type="HAMAP" id="MF_00179">
    <property type="entry name" value="RibA"/>
    <property type="match status" value="1"/>
</dbReference>
<dbReference type="InterPro" id="IPR032677">
    <property type="entry name" value="GTP_cyclohydro_II"/>
</dbReference>
<dbReference type="InterPro" id="IPR000926">
    <property type="entry name" value="RibA"/>
</dbReference>
<dbReference type="InterPro" id="IPR036144">
    <property type="entry name" value="RibA-like_sf"/>
</dbReference>
<dbReference type="NCBIfam" id="NF001591">
    <property type="entry name" value="PRK00393.1"/>
    <property type="match status" value="1"/>
</dbReference>
<dbReference type="NCBIfam" id="TIGR00505">
    <property type="entry name" value="ribA"/>
    <property type="match status" value="1"/>
</dbReference>
<dbReference type="PANTHER" id="PTHR21327:SF18">
    <property type="entry name" value="3,4-DIHYDROXY-2-BUTANONE 4-PHOSPHATE SYNTHASE"/>
    <property type="match status" value="1"/>
</dbReference>
<dbReference type="PANTHER" id="PTHR21327">
    <property type="entry name" value="GTP CYCLOHYDROLASE II-RELATED"/>
    <property type="match status" value="1"/>
</dbReference>
<dbReference type="Pfam" id="PF00925">
    <property type="entry name" value="GTP_cyclohydro2"/>
    <property type="match status" value="1"/>
</dbReference>
<dbReference type="SUPFAM" id="SSF142695">
    <property type="entry name" value="RibA-like"/>
    <property type="match status" value="1"/>
</dbReference>
<sequence length="196" mass="21836">MQLKRVAEAKLPTPWGDFLMVGFEELATGHDHVALVYGDISGHTPVLARVHSECLTGDALFSLRCDCGFQLEAALTQIAEEGRGILLYHRQEGRNIGLLNKIRAYALQDQGYDTVEANHQLGFAADERDFTLCADMFKLLGVNEVRLLTNNPKKVEILTEAGINIVERVPLIVGRNPNNEHYLDTKAEKMGHLLNK</sequence>
<keyword id="KW-0342">GTP-binding</keyword>
<keyword id="KW-0378">Hydrolase</keyword>
<keyword id="KW-0479">Metal-binding</keyword>
<keyword id="KW-0547">Nucleotide-binding</keyword>
<keyword id="KW-1185">Reference proteome</keyword>
<keyword id="KW-0686">Riboflavin biosynthesis</keyword>
<keyword id="KW-0862">Zinc</keyword>
<feature type="chain" id="PRO_1000193762" description="GTP cyclohydrolase-2">
    <location>
        <begin position="1"/>
        <end position="196"/>
    </location>
</feature>
<feature type="active site" description="Proton acceptor" evidence="1">
    <location>
        <position position="126"/>
    </location>
</feature>
<feature type="active site" description="Nucleophile" evidence="1">
    <location>
        <position position="128"/>
    </location>
</feature>
<feature type="binding site" evidence="1">
    <location>
        <begin position="49"/>
        <end position="53"/>
    </location>
    <ligand>
        <name>GTP</name>
        <dbReference type="ChEBI" id="CHEBI:37565"/>
    </ligand>
</feature>
<feature type="binding site" evidence="1">
    <location>
        <position position="54"/>
    </location>
    <ligand>
        <name>Zn(2+)</name>
        <dbReference type="ChEBI" id="CHEBI:29105"/>
        <note>catalytic</note>
    </ligand>
</feature>
<feature type="binding site" evidence="1">
    <location>
        <position position="65"/>
    </location>
    <ligand>
        <name>Zn(2+)</name>
        <dbReference type="ChEBI" id="CHEBI:29105"/>
        <note>catalytic</note>
    </ligand>
</feature>
<feature type="binding site" evidence="1">
    <location>
        <position position="67"/>
    </location>
    <ligand>
        <name>Zn(2+)</name>
        <dbReference type="ChEBI" id="CHEBI:29105"/>
        <note>catalytic</note>
    </ligand>
</feature>
<feature type="binding site" evidence="1">
    <location>
        <position position="70"/>
    </location>
    <ligand>
        <name>GTP</name>
        <dbReference type="ChEBI" id="CHEBI:37565"/>
    </ligand>
</feature>
<feature type="binding site" evidence="1">
    <location>
        <begin position="92"/>
        <end position="94"/>
    </location>
    <ligand>
        <name>GTP</name>
        <dbReference type="ChEBI" id="CHEBI:37565"/>
    </ligand>
</feature>
<feature type="binding site" evidence="1">
    <location>
        <position position="114"/>
    </location>
    <ligand>
        <name>GTP</name>
        <dbReference type="ChEBI" id="CHEBI:37565"/>
    </ligand>
</feature>
<feature type="binding site" evidence="1">
    <location>
        <position position="149"/>
    </location>
    <ligand>
        <name>GTP</name>
        <dbReference type="ChEBI" id="CHEBI:37565"/>
    </ligand>
</feature>
<feature type="binding site" evidence="1">
    <location>
        <position position="154"/>
    </location>
    <ligand>
        <name>GTP</name>
        <dbReference type="ChEBI" id="CHEBI:37565"/>
    </ligand>
</feature>
<accession>B7L4B3</accession>
<name>RIBA_ECO55</name>
<proteinExistence type="inferred from homology"/>
<protein>
    <recommendedName>
        <fullName evidence="1">GTP cyclohydrolase-2</fullName>
        <ecNumber evidence="1">3.5.4.25</ecNumber>
    </recommendedName>
    <alternativeName>
        <fullName evidence="1">GTP cyclohydrolase II</fullName>
    </alternativeName>
</protein>